<name>PYRD_SYNJA</name>
<evidence type="ECO:0000255" key="1">
    <source>
        <dbReference type="HAMAP-Rule" id="MF_00225"/>
    </source>
</evidence>
<evidence type="ECO:0000256" key="2">
    <source>
        <dbReference type="SAM" id="MobiDB-lite"/>
    </source>
</evidence>
<accession>Q2JRL7</accession>
<protein>
    <recommendedName>
        <fullName evidence="1">Dihydroorotate dehydrogenase (quinone)</fullName>
        <ecNumber evidence="1">1.3.5.2</ecNumber>
    </recommendedName>
    <alternativeName>
        <fullName evidence="1">DHOdehase</fullName>
        <shortName evidence="1">DHOD</shortName>
        <shortName evidence="1">DHODase</shortName>
    </alternativeName>
    <alternativeName>
        <fullName evidence="1">Dihydroorotate oxidase</fullName>
    </alternativeName>
</protein>
<comment type="function">
    <text evidence="1">Catalyzes the conversion of dihydroorotate to orotate with quinone as electron acceptor.</text>
</comment>
<comment type="catalytic activity">
    <reaction evidence="1">
        <text>(S)-dihydroorotate + a quinone = orotate + a quinol</text>
        <dbReference type="Rhea" id="RHEA:30187"/>
        <dbReference type="ChEBI" id="CHEBI:24646"/>
        <dbReference type="ChEBI" id="CHEBI:30839"/>
        <dbReference type="ChEBI" id="CHEBI:30864"/>
        <dbReference type="ChEBI" id="CHEBI:132124"/>
        <dbReference type="EC" id="1.3.5.2"/>
    </reaction>
</comment>
<comment type="cofactor">
    <cofactor evidence="1">
        <name>FMN</name>
        <dbReference type="ChEBI" id="CHEBI:58210"/>
    </cofactor>
    <text evidence="1">Binds 1 FMN per subunit.</text>
</comment>
<comment type="pathway">
    <text evidence="1">Pyrimidine metabolism; UMP biosynthesis via de novo pathway; orotate from (S)-dihydroorotate (quinone route): step 1/1.</text>
</comment>
<comment type="subunit">
    <text evidence="1">Monomer.</text>
</comment>
<comment type="subcellular location">
    <subcellularLocation>
        <location evidence="1">Cell membrane</location>
        <topology evidence="1">Peripheral membrane protein</topology>
    </subcellularLocation>
</comment>
<comment type="similarity">
    <text evidence="1">Belongs to the dihydroorotate dehydrogenase family. Type 2 subfamily.</text>
</comment>
<gene>
    <name evidence="1" type="primary">pyrD</name>
    <name type="ordered locus">CYA_2620</name>
</gene>
<sequence length="376" mass="40616">MNLYRDVLRPLIFSGLRADPETVKVGLLRALEWLDATQATGILALLERLFCYRDPRLEVRLWGLTFPNPIGLAAGFDKDGLAVGVWPSLGFGFVEVGTVTPGPQPGNPKPRLFQLPQDRAALNHMGFNNQGAAALAERLRRLRQRPIPIGINLGKGKATPLEEAAADYLASFRLLRELGDYFVVNVSSPNTAGLRSLQAAEQLAPILATLQGENRGQKPLLVKIAPDLDWPEIDAILELAQAYRLAGLVATNTTLRRDNLKTRFLPGLGPLAAAAGGISGAPLRQRSTQVIRYIHQATQGQLPIIGVGGIFTLADAMEKLEAGASLLQVYTGWVYEGPSLVPRLLRGLAAARNPAPSSPERMPTGIQSGRKIVMDP</sequence>
<feature type="chain" id="PRO_1000024237" description="Dihydroorotate dehydrogenase (quinone)">
    <location>
        <begin position="1"/>
        <end position="376"/>
    </location>
</feature>
<feature type="region of interest" description="Disordered" evidence="2">
    <location>
        <begin position="352"/>
        <end position="376"/>
    </location>
</feature>
<feature type="active site" description="Nucleophile" evidence="1">
    <location>
        <position position="188"/>
    </location>
</feature>
<feature type="binding site" evidence="1">
    <location>
        <begin position="74"/>
        <end position="78"/>
    </location>
    <ligand>
        <name>FMN</name>
        <dbReference type="ChEBI" id="CHEBI:58210"/>
    </ligand>
</feature>
<feature type="binding site" evidence="1">
    <location>
        <position position="78"/>
    </location>
    <ligand>
        <name>substrate</name>
    </ligand>
</feature>
<feature type="binding site" evidence="1">
    <location>
        <position position="98"/>
    </location>
    <ligand>
        <name>FMN</name>
        <dbReference type="ChEBI" id="CHEBI:58210"/>
    </ligand>
</feature>
<feature type="binding site" evidence="1">
    <location>
        <begin position="123"/>
        <end position="127"/>
    </location>
    <ligand>
        <name>substrate</name>
    </ligand>
</feature>
<feature type="binding site" evidence="1">
    <location>
        <position position="152"/>
    </location>
    <ligand>
        <name>FMN</name>
        <dbReference type="ChEBI" id="CHEBI:58210"/>
    </ligand>
</feature>
<feature type="binding site" evidence="1">
    <location>
        <position position="185"/>
    </location>
    <ligand>
        <name>FMN</name>
        <dbReference type="ChEBI" id="CHEBI:58210"/>
    </ligand>
</feature>
<feature type="binding site" evidence="1">
    <location>
        <position position="185"/>
    </location>
    <ligand>
        <name>substrate</name>
    </ligand>
</feature>
<feature type="binding site" evidence="1">
    <location>
        <position position="190"/>
    </location>
    <ligand>
        <name>substrate</name>
    </ligand>
</feature>
<feature type="binding site" evidence="1">
    <location>
        <position position="223"/>
    </location>
    <ligand>
        <name>FMN</name>
        <dbReference type="ChEBI" id="CHEBI:58210"/>
    </ligand>
</feature>
<feature type="binding site" evidence="1">
    <location>
        <position position="251"/>
    </location>
    <ligand>
        <name>FMN</name>
        <dbReference type="ChEBI" id="CHEBI:58210"/>
    </ligand>
</feature>
<feature type="binding site" evidence="1">
    <location>
        <begin position="252"/>
        <end position="253"/>
    </location>
    <ligand>
        <name>substrate</name>
    </ligand>
</feature>
<feature type="binding site" evidence="1">
    <location>
        <position position="280"/>
    </location>
    <ligand>
        <name>FMN</name>
        <dbReference type="ChEBI" id="CHEBI:58210"/>
    </ligand>
</feature>
<feature type="binding site" evidence="1">
    <location>
        <position position="309"/>
    </location>
    <ligand>
        <name>FMN</name>
        <dbReference type="ChEBI" id="CHEBI:58210"/>
    </ligand>
</feature>
<feature type="binding site" evidence="1">
    <location>
        <begin position="330"/>
        <end position="331"/>
    </location>
    <ligand>
        <name>FMN</name>
        <dbReference type="ChEBI" id="CHEBI:58210"/>
    </ligand>
</feature>
<proteinExistence type="inferred from homology"/>
<organism>
    <name type="scientific">Synechococcus sp. (strain JA-3-3Ab)</name>
    <name type="common">Cyanobacteria bacterium Yellowstone A-Prime</name>
    <dbReference type="NCBI Taxonomy" id="321327"/>
    <lineage>
        <taxon>Bacteria</taxon>
        <taxon>Bacillati</taxon>
        <taxon>Cyanobacteriota</taxon>
        <taxon>Cyanophyceae</taxon>
        <taxon>Synechococcales</taxon>
        <taxon>Synechococcaceae</taxon>
        <taxon>Synechococcus</taxon>
    </lineage>
</organism>
<keyword id="KW-1003">Cell membrane</keyword>
<keyword id="KW-0285">Flavoprotein</keyword>
<keyword id="KW-0288">FMN</keyword>
<keyword id="KW-0472">Membrane</keyword>
<keyword id="KW-0560">Oxidoreductase</keyword>
<keyword id="KW-0665">Pyrimidine biosynthesis</keyword>
<reference key="1">
    <citation type="journal article" date="2007" name="ISME J.">
        <title>Population level functional diversity in a microbial community revealed by comparative genomic and metagenomic analyses.</title>
        <authorList>
            <person name="Bhaya D."/>
            <person name="Grossman A.R."/>
            <person name="Steunou A.-S."/>
            <person name="Khuri N."/>
            <person name="Cohan F.M."/>
            <person name="Hamamura N."/>
            <person name="Melendrez M.C."/>
            <person name="Bateson M.M."/>
            <person name="Ward D.M."/>
            <person name="Heidelberg J.F."/>
        </authorList>
    </citation>
    <scope>NUCLEOTIDE SEQUENCE [LARGE SCALE GENOMIC DNA]</scope>
    <source>
        <strain>JA-3-3Ab</strain>
    </source>
</reference>
<dbReference type="EC" id="1.3.5.2" evidence="1"/>
<dbReference type="EMBL" id="CP000239">
    <property type="protein sequence ID" value="ABD00734.1"/>
    <property type="molecule type" value="Genomic_DNA"/>
</dbReference>
<dbReference type="RefSeq" id="WP_011431406.1">
    <property type="nucleotide sequence ID" value="NC_007775.1"/>
</dbReference>
<dbReference type="SMR" id="Q2JRL7"/>
<dbReference type="STRING" id="321327.CYA_2620"/>
<dbReference type="KEGG" id="cya:CYA_2620"/>
<dbReference type="eggNOG" id="COG0167">
    <property type="taxonomic scope" value="Bacteria"/>
</dbReference>
<dbReference type="HOGENOM" id="CLU_013640_2_0_3"/>
<dbReference type="OrthoDB" id="9802377at2"/>
<dbReference type="UniPathway" id="UPA00070">
    <property type="reaction ID" value="UER00946"/>
</dbReference>
<dbReference type="Proteomes" id="UP000008818">
    <property type="component" value="Chromosome"/>
</dbReference>
<dbReference type="GO" id="GO:0005737">
    <property type="term" value="C:cytoplasm"/>
    <property type="evidence" value="ECO:0007669"/>
    <property type="project" value="InterPro"/>
</dbReference>
<dbReference type="GO" id="GO:0005886">
    <property type="term" value="C:plasma membrane"/>
    <property type="evidence" value="ECO:0007669"/>
    <property type="project" value="UniProtKB-SubCell"/>
</dbReference>
<dbReference type="GO" id="GO:0106430">
    <property type="term" value="F:dihydroorotate dehydrogenase (quinone) activity"/>
    <property type="evidence" value="ECO:0007669"/>
    <property type="project" value="UniProtKB-EC"/>
</dbReference>
<dbReference type="GO" id="GO:0006207">
    <property type="term" value="P:'de novo' pyrimidine nucleobase biosynthetic process"/>
    <property type="evidence" value="ECO:0007669"/>
    <property type="project" value="InterPro"/>
</dbReference>
<dbReference type="GO" id="GO:0044205">
    <property type="term" value="P:'de novo' UMP biosynthetic process"/>
    <property type="evidence" value="ECO:0007669"/>
    <property type="project" value="UniProtKB-UniRule"/>
</dbReference>
<dbReference type="CDD" id="cd04738">
    <property type="entry name" value="DHOD_2_like"/>
    <property type="match status" value="1"/>
</dbReference>
<dbReference type="Gene3D" id="3.20.20.70">
    <property type="entry name" value="Aldolase class I"/>
    <property type="match status" value="1"/>
</dbReference>
<dbReference type="HAMAP" id="MF_00225">
    <property type="entry name" value="DHO_dh_type2"/>
    <property type="match status" value="1"/>
</dbReference>
<dbReference type="InterPro" id="IPR013785">
    <property type="entry name" value="Aldolase_TIM"/>
</dbReference>
<dbReference type="InterPro" id="IPR050074">
    <property type="entry name" value="DHO_dehydrogenase"/>
</dbReference>
<dbReference type="InterPro" id="IPR005719">
    <property type="entry name" value="Dihydroorotate_DH_2"/>
</dbReference>
<dbReference type="InterPro" id="IPR005720">
    <property type="entry name" value="Dihydroorotate_DH_cat"/>
</dbReference>
<dbReference type="InterPro" id="IPR001295">
    <property type="entry name" value="Dihydroorotate_DH_CS"/>
</dbReference>
<dbReference type="NCBIfam" id="NF003651">
    <property type="entry name" value="PRK05286.2-4"/>
    <property type="match status" value="1"/>
</dbReference>
<dbReference type="NCBIfam" id="NF003652">
    <property type="entry name" value="PRK05286.2-5"/>
    <property type="match status" value="1"/>
</dbReference>
<dbReference type="NCBIfam" id="TIGR01036">
    <property type="entry name" value="pyrD_sub2"/>
    <property type="match status" value="1"/>
</dbReference>
<dbReference type="PANTHER" id="PTHR48109:SF4">
    <property type="entry name" value="DIHYDROOROTATE DEHYDROGENASE (QUINONE), MITOCHONDRIAL"/>
    <property type="match status" value="1"/>
</dbReference>
<dbReference type="PANTHER" id="PTHR48109">
    <property type="entry name" value="DIHYDROOROTATE DEHYDROGENASE (QUINONE), MITOCHONDRIAL-RELATED"/>
    <property type="match status" value="1"/>
</dbReference>
<dbReference type="Pfam" id="PF01180">
    <property type="entry name" value="DHO_dh"/>
    <property type="match status" value="1"/>
</dbReference>
<dbReference type="SUPFAM" id="SSF51395">
    <property type="entry name" value="FMN-linked oxidoreductases"/>
    <property type="match status" value="1"/>
</dbReference>
<dbReference type="PROSITE" id="PS00911">
    <property type="entry name" value="DHODEHASE_1"/>
    <property type="match status" value="1"/>
</dbReference>
<dbReference type="PROSITE" id="PS00912">
    <property type="entry name" value="DHODEHASE_2"/>
    <property type="match status" value="1"/>
</dbReference>